<keyword id="KW-0067">ATP-binding</keyword>
<keyword id="KW-0963">Cytoplasm</keyword>
<keyword id="KW-0418">Kinase</keyword>
<keyword id="KW-0479">Metal-binding</keyword>
<keyword id="KW-0545">Nucleotide biosynthesis</keyword>
<keyword id="KW-0547">Nucleotide-binding</keyword>
<keyword id="KW-0808">Transferase</keyword>
<keyword id="KW-0862">Zinc</keyword>
<name>KAD_CLOBB</name>
<protein>
    <recommendedName>
        <fullName evidence="1">Adenylate kinase</fullName>
        <shortName evidence="1">AK</shortName>
        <ecNumber evidence="1">2.7.4.3</ecNumber>
    </recommendedName>
    <alternativeName>
        <fullName evidence="1">ATP-AMP transphosphorylase</fullName>
    </alternativeName>
    <alternativeName>
        <fullName evidence="1">ATP:AMP phosphotransferase</fullName>
    </alternativeName>
    <alternativeName>
        <fullName evidence="1">Adenylate monophosphate kinase</fullName>
    </alternativeName>
</protein>
<reference key="1">
    <citation type="submission" date="2008-04" db="EMBL/GenBank/DDBJ databases">
        <title>Complete sequence of Clostridium botulinum strain Eklund.</title>
        <authorList>
            <person name="Brinkac L.M."/>
            <person name="Brown J.L."/>
            <person name="Bruce D."/>
            <person name="Detter C."/>
            <person name="Munk C."/>
            <person name="Smith L.A."/>
            <person name="Smith T.J."/>
            <person name="Sutton G."/>
            <person name="Brettin T.S."/>
        </authorList>
    </citation>
    <scope>NUCLEOTIDE SEQUENCE [LARGE SCALE GENOMIC DNA]</scope>
    <source>
        <strain>Eklund 17B / Type B</strain>
    </source>
</reference>
<evidence type="ECO:0000255" key="1">
    <source>
        <dbReference type="HAMAP-Rule" id="MF_00235"/>
    </source>
</evidence>
<comment type="function">
    <text evidence="1">Catalyzes the reversible transfer of the terminal phosphate group between ATP and AMP. Plays an important role in cellular energy homeostasis and in adenine nucleotide metabolism.</text>
</comment>
<comment type="catalytic activity">
    <reaction evidence="1">
        <text>AMP + ATP = 2 ADP</text>
        <dbReference type="Rhea" id="RHEA:12973"/>
        <dbReference type="ChEBI" id="CHEBI:30616"/>
        <dbReference type="ChEBI" id="CHEBI:456215"/>
        <dbReference type="ChEBI" id="CHEBI:456216"/>
        <dbReference type="EC" id="2.7.4.3"/>
    </reaction>
</comment>
<comment type="pathway">
    <text evidence="1">Purine metabolism; AMP biosynthesis via salvage pathway; AMP from ADP: step 1/1.</text>
</comment>
<comment type="subunit">
    <text evidence="1">Monomer.</text>
</comment>
<comment type="subcellular location">
    <subcellularLocation>
        <location evidence="1">Cytoplasm</location>
    </subcellularLocation>
</comment>
<comment type="domain">
    <text evidence="1">Consists of three domains, a large central CORE domain and two small peripheral domains, NMPbind and LID, which undergo movements during catalysis. The LID domain closes over the site of phosphoryl transfer upon ATP binding. Assembling and dissambling the active center during each catalytic cycle provides an effective means to prevent ATP hydrolysis. Some bacteria have evolved a zinc-coordinating structure that stabilizes the LID domain.</text>
</comment>
<comment type="similarity">
    <text evidence="1">Belongs to the adenylate kinase family.</text>
</comment>
<gene>
    <name evidence="1" type="primary">adk</name>
    <name type="ordered locus">CLL_A0259</name>
</gene>
<dbReference type="EC" id="2.7.4.3" evidence="1"/>
<dbReference type="EMBL" id="CP001056">
    <property type="protein sequence ID" value="ACD22915.1"/>
    <property type="molecule type" value="Genomic_DNA"/>
</dbReference>
<dbReference type="SMR" id="B2TIJ6"/>
<dbReference type="KEGG" id="cbk:CLL_A0259"/>
<dbReference type="HOGENOM" id="CLU_032354_1_2_9"/>
<dbReference type="UniPathway" id="UPA00588">
    <property type="reaction ID" value="UER00649"/>
</dbReference>
<dbReference type="Proteomes" id="UP000001195">
    <property type="component" value="Chromosome"/>
</dbReference>
<dbReference type="GO" id="GO:0005737">
    <property type="term" value="C:cytoplasm"/>
    <property type="evidence" value="ECO:0007669"/>
    <property type="project" value="UniProtKB-SubCell"/>
</dbReference>
<dbReference type="GO" id="GO:0004017">
    <property type="term" value="F:adenylate kinase activity"/>
    <property type="evidence" value="ECO:0007669"/>
    <property type="project" value="UniProtKB-UniRule"/>
</dbReference>
<dbReference type="GO" id="GO:0005524">
    <property type="term" value="F:ATP binding"/>
    <property type="evidence" value="ECO:0007669"/>
    <property type="project" value="UniProtKB-UniRule"/>
</dbReference>
<dbReference type="GO" id="GO:0008270">
    <property type="term" value="F:zinc ion binding"/>
    <property type="evidence" value="ECO:0007669"/>
    <property type="project" value="UniProtKB-UniRule"/>
</dbReference>
<dbReference type="GO" id="GO:0044209">
    <property type="term" value="P:AMP salvage"/>
    <property type="evidence" value="ECO:0007669"/>
    <property type="project" value="UniProtKB-UniRule"/>
</dbReference>
<dbReference type="CDD" id="cd01428">
    <property type="entry name" value="ADK"/>
    <property type="match status" value="1"/>
</dbReference>
<dbReference type="FunFam" id="3.40.50.300:FF:000106">
    <property type="entry name" value="Adenylate kinase mitochondrial"/>
    <property type="match status" value="1"/>
</dbReference>
<dbReference type="Gene3D" id="3.40.50.300">
    <property type="entry name" value="P-loop containing nucleotide triphosphate hydrolases"/>
    <property type="match status" value="1"/>
</dbReference>
<dbReference type="HAMAP" id="MF_00235">
    <property type="entry name" value="Adenylate_kinase_Adk"/>
    <property type="match status" value="1"/>
</dbReference>
<dbReference type="InterPro" id="IPR006259">
    <property type="entry name" value="Adenyl_kin_sub"/>
</dbReference>
<dbReference type="InterPro" id="IPR000850">
    <property type="entry name" value="Adenylat/UMP-CMP_kin"/>
</dbReference>
<dbReference type="InterPro" id="IPR033690">
    <property type="entry name" value="Adenylat_kinase_CS"/>
</dbReference>
<dbReference type="InterPro" id="IPR007862">
    <property type="entry name" value="Adenylate_kinase_lid-dom"/>
</dbReference>
<dbReference type="InterPro" id="IPR027417">
    <property type="entry name" value="P-loop_NTPase"/>
</dbReference>
<dbReference type="NCBIfam" id="TIGR01351">
    <property type="entry name" value="adk"/>
    <property type="match status" value="1"/>
</dbReference>
<dbReference type="NCBIfam" id="NF001380">
    <property type="entry name" value="PRK00279.1-2"/>
    <property type="match status" value="1"/>
</dbReference>
<dbReference type="NCBIfam" id="NF001381">
    <property type="entry name" value="PRK00279.1-3"/>
    <property type="match status" value="1"/>
</dbReference>
<dbReference type="NCBIfam" id="NF011100">
    <property type="entry name" value="PRK14527.1"/>
    <property type="match status" value="1"/>
</dbReference>
<dbReference type="PANTHER" id="PTHR23359">
    <property type="entry name" value="NUCLEOTIDE KINASE"/>
    <property type="match status" value="1"/>
</dbReference>
<dbReference type="Pfam" id="PF00406">
    <property type="entry name" value="ADK"/>
    <property type="match status" value="1"/>
</dbReference>
<dbReference type="Pfam" id="PF05191">
    <property type="entry name" value="ADK_lid"/>
    <property type="match status" value="1"/>
</dbReference>
<dbReference type="PRINTS" id="PR00094">
    <property type="entry name" value="ADENYLTKNASE"/>
</dbReference>
<dbReference type="SUPFAM" id="SSF52540">
    <property type="entry name" value="P-loop containing nucleoside triphosphate hydrolases"/>
    <property type="match status" value="1"/>
</dbReference>
<dbReference type="PROSITE" id="PS00113">
    <property type="entry name" value="ADENYLATE_KINASE"/>
    <property type="match status" value="1"/>
</dbReference>
<feature type="chain" id="PRO_1000100549" description="Adenylate kinase">
    <location>
        <begin position="1"/>
        <end position="215"/>
    </location>
</feature>
<feature type="region of interest" description="NMP" evidence="1">
    <location>
        <begin position="30"/>
        <end position="59"/>
    </location>
</feature>
<feature type="region of interest" description="LID" evidence="1">
    <location>
        <begin position="126"/>
        <end position="163"/>
    </location>
</feature>
<feature type="binding site" evidence="1">
    <location>
        <begin position="10"/>
        <end position="15"/>
    </location>
    <ligand>
        <name>ATP</name>
        <dbReference type="ChEBI" id="CHEBI:30616"/>
    </ligand>
</feature>
<feature type="binding site" evidence="1">
    <location>
        <position position="31"/>
    </location>
    <ligand>
        <name>AMP</name>
        <dbReference type="ChEBI" id="CHEBI:456215"/>
    </ligand>
</feature>
<feature type="binding site" evidence="1">
    <location>
        <position position="36"/>
    </location>
    <ligand>
        <name>AMP</name>
        <dbReference type="ChEBI" id="CHEBI:456215"/>
    </ligand>
</feature>
<feature type="binding site" evidence="1">
    <location>
        <begin position="57"/>
        <end position="59"/>
    </location>
    <ligand>
        <name>AMP</name>
        <dbReference type="ChEBI" id="CHEBI:456215"/>
    </ligand>
</feature>
<feature type="binding site" evidence="1">
    <location>
        <begin position="85"/>
        <end position="88"/>
    </location>
    <ligand>
        <name>AMP</name>
        <dbReference type="ChEBI" id="CHEBI:456215"/>
    </ligand>
</feature>
<feature type="binding site" evidence="1">
    <location>
        <position position="92"/>
    </location>
    <ligand>
        <name>AMP</name>
        <dbReference type="ChEBI" id="CHEBI:456215"/>
    </ligand>
</feature>
<feature type="binding site" evidence="1">
    <location>
        <position position="127"/>
    </location>
    <ligand>
        <name>ATP</name>
        <dbReference type="ChEBI" id="CHEBI:30616"/>
    </ligand>
</feature>
<feature type="binding site" evidence="1">
    <location>
        <position position="130"/>
    </location>
    <ligand>
        <name>Zn(2+)</name>
        <dbReference type="ChEBI" id="CHEBI:29105"/>
        <note>structural</note>
    </ligand>
</feature>
<feature type="binding site" evidence="1">
    <location>
        <position position="133"/>
    </location>
    <ligand>
        <name>Zn(2+)</name>
        <dbReference type="ChEBI" id="CHEBI:29105"/>
        <note>structural</note>
    </ligand>
</feature>
<feature type="binding site" evidence="1">
    <location>
        <begin position="136"/>
        <end position="137"/>
    </location>
    <ligand>
        <name>ATP</name>
        <dbReference type="ChEBI" id="CHEBI:30616"/>
    </ligand>
</feature>
<feature type="binding site" evidence="1">
    <location>
        <position position="150"/>
    </location>
    <ligand>
        <name>Zn(2+)</name>
        <dbReference type="ChEBI" id="CHEBI:29105"/>
        <note>structural</note>
    </ligand>
</feature>
<feature type="binding site" evidence="1">
    <location>
        <position position="153"/>
    </location>
    <ligand>
        <name>Zn(2+)</name>
        <dbReference type="ChEBI" id="CHEBI:29105"/>
        <note>structural</note>
    </ligand>
</feature>
<feature type="binding site" evidence="1">
    <location>
        <position position="160"/>
    </location>
    <ligand>
        <name>AMP</name>
        <dbReference type="ChEBI" id="CHEBI:456215"/>
    </ligand>
</feature>
<feature type="binding site" evidence="1">
    <location>
        <position position="171"/>
    </location>
    <ligand>
        <name>AMP</name>
        <dbReference type="ChEBI" id="CHEBI:456215"/>
    </ligand>
</feature>
<feature type="binding site" evidence="1">
    <location>
        <position position="199"/>
    </location>
    <ligand>
        <name>ATP</name>
        <dbReference type="ChEBI" id="CHEBI:30616"/>
    </ligand>
</feature>
<sequence length="215" mass="24009">MKIVLLGPPGAGKGTQAKSISNRYSIPHISTGDIFRKNISENTPLGMEARSYMDKGLLVPDEVTINMVKDRLQEEDCLSGYLLDGFPRTVAQAEALNEFLENRNEQLDTALLIDVPSEFILDRMTGRRVCTSCGGSFHIKFNPPTIDGKCNLCGSDIVQRKDDTVETVKERIDVYDKQTQPLIEFYKSKNLLSMVDGTKAIDQVFEDICKLLGEQ</sequence>
<proteinExistence type="inferred from homology"/>
<organism>
    <name type="scientific">Clostridium botulinum (strain Eklund 17B / Type B)</name>
    <dbReference type="NCBI Taxonomy" id="935198"/>
    <lineage>
        <taxon>Bacteria</taxon>
        <taxon>Bacillati</taxon>
        <taxon>Bacillota</taxon>
        <taxon>Clostridia</taxon>
        <taxon>Eubacteriales</taxon>
        <taxon>Clostridiaceae</taxon>
        <taxon>Clostridium</taxon>
    </lineage>
</organism>
<accession>B2TIJ6</accession>